<reference key="1">
    <citation type="submission" date="2006-01" db="EMBL/GenBank/DDBJ databases">
        <title>Complete sequence of Novosphingobium aromaticivorans DSM 12444.</title>
        <authorList>
            <consortium name="US DOE Joint Genome Institute"/>
            <person name="Copeland A."/>
            <person name="Lucas S."/>
            <person name="Lapidus A."/>
            <person name="Barry K."/>
            <person name="Detter J.C."/>
            <person name="Glavina T."/>
            <person name="Hammon N."/>
            <person name="Israni S."/>
            <person name="Pitluck S."/>
            <person name="Chain P."/>
            <person name="Malfatti S."/>
            <person name="Shin M."/>
            <person name="Vergez L."/>
            <person name="Schmutz J."/>
            <person name="Larimer F."/>
            <person name="Land M."/>
            <person name="Kyrpides N."/>
            <person name="Ivanova N."/>
            <person name="Fredrickson J."/>
            <person name="Balkwill D."/>
            <person name="Romine M.F."/>
            <person name="Richardson P."/>
        </authorList>
    </citation>
    <scope>NUCLEOTIDE SEQUENCE [LARGE SCALE GENOMIC DNA]</scope>
    <source>
        <strain>ATCC 700278 / DSM 12444 / CCUG 56034 / CIP 105152 / NBRC 16084 / F199</strain>
    </source>
</reference>
<organism>
    <name type="scientific">Novosphingobium aromaticivorans (strain ATCC 700278 / DSM 12444 / CCUG 56034 / CIP 105152 / NBRC 16084 / F199)</name>
    <dbReference type="NCBI Taxonomy" id="279238"/>
    <lineage>
        <taxon>Bacteria</taxon>
        <taxon>Pseudomonadati</taxon>
        <taxon>Pseudomonadota</taxon>
        <taxon>Alphaproteobacteria</taxon>
        <taxon>Sphingomonadales</taxon>
        <taxon>Sphingomonadaceae</taxon>
        <taxon>Novosphingobium</taxon>
    </lineage>
</organism>
<comment type="function">
    <text evidence="1">Part of an energy-coupled inorganic carbon pump.</text>
</comment>
<comment type="cofactor">
    <cofactor evidence="1">
        <name>Zn(2+)</name>
        <dbReference type="ChEBI" id="CHEBI:29105"/>
    </cofactor>
</comment>
<comment type="subunit">
    <text evidence="1">Forms a complex with DabB.</text>
</comment>
<comment type="subcellular location">
    <subcellularLocation>
        <location evidence="1">Cell inner membrane</location>
        <topology evidence="1">Peripheral membrane protein</topology>
    </subcellularLocation>
</comment>
<comment type="similarity">
    <text evidence="1">Belongs to the inorganic carbon transporter (TC 9.A.2) DabA family.</text>
</comment>
<proteinExistence type="inferred from homology"/>
<sequence>MTLATRSLIKNLSSALGAQAEREQLIALISIATQTVAPLWPLDSAIAVNPLSGFEEQPFEEVLPEAAALFGARPTLSLNEWRTLMDEGRIDQVSLRKAVVNALGGPDEAFALLGPDLNAYNLLVARLLDMEAEDVPPVRRALSPGMATLARWLAAFFDRNAALRLPGRERGLYACLSEALRHDPALLRASNATGRAWLENAPADPVDMLILAARRDAVGPERRLPWLRAMVASLPGWAAHLRWRSEHAGPATSLGAPACMADLMALVALVQGVVQPAPRAVPDPDCPEDVEAALLVHCGVAQDAPAKWPEAGRARLRAVAALTHAQLGLIFQEAAESSFLGQLAPQLEGASARLAAPQSTLRPEAQAIFCIDVRSEPMRRALETQGRFETLGYAGFFGLPIAINPACAAPARNQLPVLLSPSHVVPERAMPGREAEATAMLARHAALGDAQAMLDTTKSGAIGFAAAEAAGPVAAVAMLARTLAPRLTHRLRQRLIGERGHVLAPAACNDQDHERHDGQGEGIPLAQRVAYARGMFALTGLSPQTARLVALVGHGGCTTNNAFAASLDCGACGGHPGGPNARLMAAILNDPAVRKGLAAKGVDLPHDTWFIAAQHDTTRDEVEIFDRHLVPASHVADLARFERALSCAGAQSRDERAARLDRTADDLLTGAAHWGEVRPEWGLSGNAAFIVGPRALTREVDLGGNAFLHSYDWKKDDDGSALTGIMTAPMIVAQWINCQYLFSTIDNEIFGAGDKTTQNVVGGFGVVQGSGGDLCTGLPRQSLFRDDGTPYHTPRRLAVIVHAPLQRVQDIVLRHDAVGRLVENGWVNLVVIDPWKHKAHHWVRGDWAVRPC</sequence>
<dbReference type="EMBL" id="CP000248">
    <property type="protein sequence ID" value="ABD26911.1"/>
    <property type="molecule type" value="Genomic_DNA"/>
</dbReference>
<dbReference type="RefSeq" id="WP_011446117.1">
    <property type="nucleotide sequence ID" value="NC_007794.1"/>
</dbReference>
<dbReference type="STRING" id="279238.Saro_2475"/>
<dbReference type="KEGG" id="nar:Saro_2475"/>
<dbReference type="eggNOG" id="COG3002">
    <property type="taxonomic scope" value="Bacteria"/>
</dbReference>
<dbReference type="HOGENOM" id="CLU_009885_0_0_5"/>
<dbReference type="Proteomes" id="UP000009134">
    <property type="component" value="Chromosome"/>
</dbReference>
<dbReference type="GO" id="GO:0005886">
    <property type="term" value="C:plasma membrane"/>
    <property type="evidence" value="ECO:0007669"/>
    <property type="project" value="UniProtKB-SubCell"/>
</dbReference>
<dbReference type="GO" id="GO:0008270">
    <property type="term" value="F:zinc ion binding"/>
    <property type="evidence" value="ECO:0007669"/>
    <property type="project" value="UniProtKB-UniRule"/>
</dbReference>
<dbReference type="HAMAP" id="MF_01871">
    <property type="entry name" value="DabA"/>
    <property type="match status" value="1"/>
</dbReference>
<dbReference type="InterPro" id="IPR018752">
    <property type="entry name" value="DabA"/>
</dbReference>
<dbReference type="PANTHER" id="PTHR38344:SF1">
    <property type="entry name" value="INORGANIC CARBON TRANSPORTER SUBUNIT DABA-RELATED"/>
    <property type="match status" value="1"/>
</dbReference>
<dbReference type="PANTHER" id="PTHR38344">
    <property type="entry name" value="UPF0753 PROTEIN AQ_863"/>
    <property type="match status" value="1"/>
</dbReference>
<dbReference type="Pfam" id="PF10070">
    <property type="entry name" value="DabA"/>
    <property type="match status" value="1"/>
</dbReference>
<name>DABA_NOVAD</name>
<protein>
    <recommendedName>
        <fullName evidence="1">Probable inorganic carbon transporter subunit DabA</fullName>
    </recommendedName>
</protein>
<feature type="chain" id="PRO_0000387285" description="Probable inorganic carbon transporter subunit DabA">
    <location>
        <begin position="1"/>
        <end position="852"/>
    </location>
</feature>
<feature type="binding site" evidence="1">
    <location>
        <position position="370"/>
    </location>
    <ligand>
        <name>Zn(2+)</name>
        <dbReference type="ChEBI" id="CHEBI:29105"/>
    </ligand>
</feature>
<feature type="binding site" evidence="1">
    <location>
        <position position="372"/>
    </location>
    <ligand>
        <name>Zn(2+)</name>
        <dbReference type="ChEBI" id="CHEBI:29105"/>
    </ligand>
</feature>
<feature type="binding site" evidence="1">
    <location>
        <position position="554"/>
    </location>
    <ligand>
        <name>Zn(2+)</name>
        <dbReference type="ChEBI" id="CHEBI:29105"/>
    </ligand>
</feature>
<feature type="binding site" evidence="1">
    <location>
        <position position="569"/>
    </location>
    <ligand>
        <name>Zn(2+)</name>
        <dbReference type="ChEBI" id="CHEBI:29105"/>
    </ligand>
</feature>
<evidence type="ECO:0000255" key="1">
    <source>
        <dbReference type="HAMAP-Rule" id="MF_01871"/>
    </source>
</evidence>
<accession>Q2G5G2</accession>
<keyword id="KW-0997">Cell inner membrane</keyword>
<keyword id="KW-1003">Cell membrane</keyword>
<keyword id="KW-0472">Membrane</keyword>
<keyword id="KW-0479">Metal-binding</keyword>
<keyword id="KW-1185">Reference proteome</keyword>
<keyword id="KW-0813">Transport</keyword>
<keyword id="KW-0862">Zinc</keyword>
<gene>
    <name evidence="1" type="primary">dabA</name>
    <name type="ordered locus">Saro_2475</name>
</gene>